<keyword id="KW-0963">Cytoplasm</keyword>
<keyword id="KW-0441">Lipid A biosynthesis</keyword>
<keyword id="KW-0444">Lipid biosynthesis</keyword>
<keyword id="KW-0443">Lipid metabolism</keyword>
<keyword id="KW-0456">Lyase</keyword>
<keyword id="KW-1185">Reference proteome</keyword>
<evidence type="ECO:0000255" key="1">
    <source>
        <dbReference type="HAMAP-Rule" id="MF_00406"/>
    </source>
</evidence>
<feature type="chain" id="PRO_0000340796" description="3-hydroxyacyl-[acyl-carrier-protein] dehydratase FabZ">
    <location>
        <begin position="1"/>
        <end position="149"/>
    </location>
</feature>
<feature type="active site" evidence="1">
    <location>
        <position position="53"/>
    </location>
</feature>
<name>FABZ_POLAQ</name>
<protein>
    <recommendedName>
        <fullName evidence="1">3-hydroxyacyl-[acyl-carrier-protein] dehydratase FabZ</fullName>
        <ecNumber evidence="1">4.2.1.59</ecNumber>
    </recommendedName>
    <alternativeName>
        <fullName evidence="1">(3R)-hydroxymyristoyl-[acyl-carrier-protein] dehydratase</fullName>
        <shortName evidence="1">(3R)-hydroxymyristoyl-ACP dehydrase</shortName>
    </alternativeName>
    <alternativeName>
        <fullName evidence="1">Beta-hydroxyacyl-ACP dehydratase</fullName>
    </alternativeName>
</protein>
<comment type="function">
    <text evidence="1">Involved in unsaturated fatty acids biosynthesis. Catalyzes the dehydration of short chain beta-hydroxyacyl-ACPs and long chain saturated and unsaturated beta-hydroxyacyl-ACPs.</text>
</comment>
<comment type="catalytic activity">
    <reaction evidence="1">
        <text>a (3R)-hydroxyacyl-[ACP] = a (2E)-enoyl-[ACP] + H2O</text>
        <dbReference type="Rhea" id="RHEA:13097"/>
        <dbReference type="Rhea" id="RHEA-COMP:9925"/>
        <dbReference type="Rhea" id="RHEA-COMP:9945"/>
        <dbReference type="ChEBI" id="CHEBI:15377"/>
        <dbReference type="ChEBI" id="CHEBI:78784"/>
        <dbReference type="ChEBI" id="CHEBI:78827"/>
        <dbReference type="EC" id="4.2.1.59"/>
    </reaction>
</comment>
<comment type="subcellular location">
    <subcellularLocation>
        <location evidence="1">Cytoplasm</location>
    </subcellularLocation>
</comment>
<comment type="similarity">
    <text evidence="1">Belongs to the thioester dehydratase family. FabZ subfamily.</text>
</comment>
<dbReference type="EC" id="4.2.1.59" evidence="1"/>
<dbReference type="EMBL" id="CP000655">
    <property type="protein sequence ID" value="ABP34654.1"/>
    <property type="molecule type" value="Genomic_DNA"/>
</dbReference>
<dbReference type="RefSeq" id="WP_011903277.1">
    <property type="nucleotide sequence ID" value="NC_009379.1"/>
</dbReference>
<dbReference type="SMR" id="A4SYU0"/>
<dbReference type="GeneID" id="31481830"/>
<dbReference type="KEGG" id="pnu:Pnuc_1440"/>
<dbReference type="eggNOG" id="COG0764">
    <property type="taxonomic scope" value="Bacteria"/>
</dbReference>
<dbReference type="HOGENOM" id="CLU_078912_3_0_4"/>
<dbReference type="Proteomes" id="UP000000231">
    <property type="component" value="Chromosome"/>
</dbReference>
<dbReference type="GO" id="GO:0005737">
    <property type="term" value="C:cytoplasm"/>
    <property type="evidence" value="ECO:0007669"/>
    <property type="project" value="UniProtKB-SubCell"/>
</dbReference>
<dbReference type="GO" id="GO:0016020">
    <property type="term" value="C:membrane"/>
    <property type="evidence" value="ECO:0007669"/>
    <property type="project" value="GOC"/>
</dbReference>
<dbReference type="GO" id="GO:0019171">
    <property type="term" value="F:(3R)-hydroxyacyl-[acyl-carrier-protein] dehydratase activity"/>
    <property type="evidence" value="ECO:0007669"/>
    <property type="project" value="UniProtKB-EC"/>
</dbReference>
<dbReference type="GO" id="GO:0006633">
    <property type="term" value="P:fatty acid biosynthetic process"/>
    <property type="evidence" value="ECO:0007669"/>
    <property type="project" value="UniProtKB-UniRule"/>
</dbReference>
<dbReference type="GO" id="GO:0009245">
    <property type="term" value="P:lipid A biosynthetic process"/>
    <property type="evidence" value="ECO:0007669"/>
    <property type="project" value="UniProtKB-UniRule"/>
</dbReference>
<dbReference type="CDD" id="cd01288">
    <property type="entry name" value="FabZ"/>
    <property type="match status" value="1"/>
</dbReference>
<dbReference type="FunFam" id="3.10.129.10:FF:000001">
    <property type="entry name" value="3-hydroxyacyl-[acyl-carrier-protein] dehydratase FabZ"/>
    <property type="match status" value="1"/>
</dbReference>
<dbReference type="Gene3D" id="3.10.129.10">
    <property type="entry name" value="Hotdog Thioesterase"/>
    <property type="match status" value="1"/>
</dbReference>
<dbReference type="HAMAP" id="MF_00406">
    <property type="entry name" value="FabZ"/>
    <property type="match status" value="1"/>
</dbReference>
<dbReference type="InterPro" id="IPR013114">
    <property type="entry name" value="FabA_FabZ"/>
</dbReference>
<dbReference type="InterPro" id="IPR010084">
    <property type="entry name" value="FabZ"/>
</dbReference>
<dbReference type="InterPro" id="IPR029069">
    <property type="entry name" value="HotDog_dom_sf"/>
</dbReference>
<dbReference type="NCBIfam" id="TIGR01750">
    <property type="entry name" value="fabZ"/>
    <property type="match status" value="1"/>
</dbReference>
<dbReference type="NCBIfam" id="NF000582">
    <property type="entry name" value="PRK00006.1"/>
    <property type="match status" value="1"/>
</dbReference>
<dbReference type="PANTHER" id="PTHR30272">
    <property type="entry name" value="3-HYDROXYACYL-[ACYL-CARRIER-PROTEIN] DEHYDRATASE"/>
    <property type="match status" value="1"/>
</dbReference>
<dbReference type="PANTHER" id="PTHR30272:SF1">
    <property type="entry name" value="3-HYDROXYACYL-[ACYL-CARRIER-PROTEIN] DEHYDRATASE"/>
    <property type="match status" value="1"/>
</dbReference>
<dbReference type="Pfam" id="PF07977">
    <property type="entry name" value="FabA"/>
    <property type="match status" value="1"/>
</dbReference>
<dbReference type="SUPFAM" id="SSF54637">
    <property type="entry name" value="Thioesterase/thiol ester dehydrase-isomerase"/>
    <property type="match status" value="1"/>
</dbReference>
<reference key="1">
    <citation type="journal article" date="2012" name="Stand. Genomic Sci.">
        <title>Complete genome sequence of Polynucleobacter necessarius subsp. asymbioticus type strain (QLW-P1DMWA-1(T)).</title>
        <authorList>
            <person name="Meincke L."/>
            <person name="Copeland A."/>
            <person name="Lapidus A."/>
            <person name="Lucas S."/>
            <person name="Berry K.W."/>
            <person name="Del Rio T.G."/>
            <person name="Hammon N."/>
            <person name="Dalin E."/>
            <person name="Tice H."/>
            <person name="Pitluck S."/>
            <person name="Richardson P."/>
            <person name="Bruce D."/>
            <person name="Goodwin L."/>
            <person name="Han C."/>
            <person name="Tapia R."/>
            <person name="Detter J.C."/>
            <person name="Schmutz J."/>
            <person name="Brettin T."/>
            <person name="Larimer F."/>
            <person name="Land M."/>
            <person name="Hauser L."/>
            <person name="Kyrpides N.C."/>
            <person name="Ivanova N."/>
            <person name="Goker M."/>
            <person name="Woyke T."/>
            <person name="Wu Q.L."/>
            <person name="Pockl M."/>
            <person name="Hahn M.W."/>
            <person name="Klenk H.P."/>
        </authorList>
    </citation>
    <scope>NUCLEOTIDE SEQUENCE [LARGE SCALE GENOMIC DNA]</scope>
    <source>
        <strain>DSM 18221 / CIP 109841 / QLW-P1DMWA-1</strain>
    </source>
</reference>
<proteinExistence type="inferred from homology"/>
<sequence>MSNPIAIDIHKILQLLPHRYPFLLVDRVLEITPRETITALKNVTMNEPFFQGHFPDFPVMPGVLIIEALAQTAALLTFSEERAEDAIYYFAGIDGARFKKPVLPGDQLIMTARLERGRAGIYKFAVQATVDGEIAAEANITCAVRSKGA</sequence>
<organism>
    <name type="scientific">Polynucleobacter asymbioticus (strain DSM 18221 / CIP 109841 / QLW-P1DMWA-1)</name>
    <name type="common">Polynucleobacter necessarius subsp. asymbioticus</name>
    <dbReference type="NCBI Taxonomy" id="312153"/>
    <lineage>
        <taxon>Bacteria</taxon>
        <taxon>Pseudomonadati</taxon>
        <taxon>Pseudomonadota</taxon>
        <taxon>Betaproteobacteria</taxon>
        <taxon>Burkholderiales</taxon>
        <taxon>Burkholderiaceae</taxon>
        <taxon>Polynucleobacter</taxon>
    </lineage>
</organism>
<gene>
    <name evidence="1" type="primary">fabZ</name>
    <name type="ordered locus">Pnuc_1440</name>
</gene>
<accession>A4SYU0</accession>